<sequence>MATIDKHSYAHMFGPTIGDRVRLGDTDLWLEVEKDFTEYGEEVKFGGGKVIRDGMGQSQASCFDTPDLVITNVVILDHWGIIKADIGIKDGRIAIIGKAGNPDVQDNIDIEIGPGTEIIAGEGQIVTAGGIDAHIHFICPQQIDEALMSGVTTMIGGGTGPATGSNATTCTPGPWNTHKMLQATNDFPMNFGFLGKGNTSLPIALEEQIEAGVCGLKLHEDWGTTPASIDNCLSVAERYDVQIAIHTDTLNESGFVEDTLGAFKGRTIHTYHTEGAGGGHSPDIIRACGESNVLPSSTNPTRPYTINTIDEHLDMLMVCHHLDPAIPEDIAFADSRIRKESIAAEDIMHDLGAISMIASDSQAMGRVGEMITRTWQTAHKMKQQRGPLAPDTERNDNFRLKRYVAKYTINPAISHGISHEVGSIEIGKLADLVLWKPAFFGIKPAMIIKSGFIAAAPMGDANASIPTPQPVYYRPMFGAHGQAPANTSMTFMSQASLDAGVPDKIGLTRMVSACKNTRNIGKDDMIHNSWQPTIEVDAQTYEVRANGELLTCEPVTTLPLAQLYCLF</sequence>
<gene>
    <name evidence="1" type="primary">ureC</name>
    <name type="ordered locus">MADE_1014280</name>
</gene>
<keyword id="KW-0963">Cytoplasm</keyword>
<keyword id="KW-0378">Hydrolase</keyword>
<keyword id="KW-0479">Metal-binding</keyword>
<keyword id="KW-0533">Nickel</keyword>
<organism>
    <name type="scientific">Alteromonas mediterranea (strain DSM 17117 / CIP 110805 / LMG 28347 / Deep ecotype)</name>
    <dbReference type="NCBI Taxonomy" id="1774373"/>
    <lineage>
        <taxon>Bacteria</taxon>
        <taxon>Pseudomonadati</taxon>
        <taxon>Pseudomonadota</taxon>
        <taxon>Gammaproteobacteria</taxon>
        <taxon>Alteromonadales</taxon>
        <taxon>Alteromonadaceae</taxon>
        <taxon>Alteromonas/Salinimonas group</taxon>
        <taxon>Alteromonas</taxon>
    </lineage>
</organism>
<name>URE1_ALTMD</name>
<reference key="1">
    <citation type="journal article" date="2008" name="ISME J.">
        <title>Comparative genomics of two ecotypes of the marine planktonic copiotroph Alteromonas macleodii suggests alternative lifestyles associated with different kinds of particulate organic matter.</title>
        <authorList>
            <person name="Ivars-Martinez E."/>
            <person name="Martin-Cuadrado A.-B."/>
            <person name="D'Auria G."/>
            <person name="Mira A."/>
            <person name="Ferriera S."/>
            <person name="Johnson J."/>
            <person name="Friedman R."/>
            <person name="Rodriguez-Valera F."/>
        </authorList>
    </citation>
    <scope>NUCLEOTIDE SEQUENCE [LARGE SCALE GENOMIC DNA]</scope>
    <source>
        <strain>DSM 17117 / CIP 110805 / LMG 28347 / Deep ecotype</strain>
    </source>
</reference>
<dbReference type="EC" id="3.5.1.5" evidence="1"/>
<dbReference type="EMBL" id="CP001103">
    <property type="protein sequence ID" value="AEA98990.1"/>
    <property type="molecule type" value="Genomic_DNA"/>
</dbReference>
<dbReference type="RefSeq" id="WP_012519282.1">
    <property type="nucleotide sequence ID" value="NC_011138.3"/>
</dbReference>
<dbReference type="SMR" id="B4RSX9"/>
<dbReference type="KEGG" id="amc:MADE_1014280"/>
<dbReference type="HOGENOM" id="CLU_000980_0_0_6"/>
<dbReference type="UniPathway" id="UPA00258">
    <property type="reaction ID" value="UER00370"/>
</dbReference>
<dbReference type="Proteomes" id="UP000001870">
    <property type="component" value="Chromosome"/>
</dbReference>
<dbReference type="GO" id="GO:0005737">
    <property type="term" value="C:cytoplasm"/>
    <property type="evidence" value="ECO:0007669"/>
    <property type="project" value="UniProtKB-SubCell"/>
</dbReference>
<dbReference type="GO" id="GO:0016151">
    <property type="term" value="F:nickel cation binding"/>
    <property type="evidence" value="ECO:0007669"/>
    <property type="project" value="UniProtKB-UniRule"/>
</dbReference>
<dbReference type="GO" id="GO:0009039">
    <property type="term" value="F:urease activity"/>
    <property type="evidence" value="ECO:0007669"/>
    <property type="project" value="UniProtKB-UniRule"/>
</dbReference>
<dbReference type="GO" id="GO:0043419">
    <property type="term" value="P:urea catabolic process"/>
    <property type="evidence" value="ECO:0007669"/>
    <property type="project" value="UniProtKB-UniRule"/>
</dbReference>
<dbReference type="CDD" id="cd00375">
    <property type="entry name" value="Urease_alpha"/>
    <property type="match status" value="1"/>
</dbReference>
<dbReference type="Gene3D" id="3.20.20.140">
    <property type="entry name" value="Metal-dependent hydrolases"/>
    <property type="match status" value="1"/>
</dbReference>
<dbReference type="Gene3D" id="2.30.40.10">
    <property type="entry name" value="Urease, subunit C, domain 1"/>
    <property type="match status" value="1"/>
</dbReference>
<dbReference type="HAMAP" id="MF_01953">
    <property type="entry name" value="Urease_alpha"/>
    <property type="match status" value="1"/>
</dbReference>
<dbReference type="InterPro" id="IPR006680">
    <property type="entry name" value="Amidohydro-rel"/>
</dbReference>
<dbReference type="InterPro" id="IPR011059">
    <property type="entry name" value="Metal-dep_hydrolase_composite"/>
</dbReference>
<dbReference type="InterPro" id="IPR032466">
    <property type="entry name" value="Metal_Hydrolase"/>
</dbReference>
<dbReference type="InterPro" id="IPR011612">
    <property type="entry name" value="Urease_alpha_N_dom"/>
</dbReference>
<dbReference type="InterPro" id="IPR050112">
    <property type="entry name" value="Urease_alpha_subunit"/>
</dbReference>
<dbReference type="InterPro" id="IPR017950">
    <property type="entry name" value="Urease_AS"/>
</dbReference>
<dbReference type="InterPro" id="IPR005848">
    <property type="entry name" value="Urease_asu"/>
</dbReference>
<dbReference type="InterPro" id="IPR017951">
    <property type="entry name" value="Urease_asu_c"/>
</dbReference>
<dbReference type="InterPro" id="IPR029754">
    <property type="entry name" value="Urease_Ni-bd"/>
</dbReference>
<dbReference type="NCBIfam" id="NF009685">
    <property type="entry name" value="PRK13206.1"/>
    <property type="match status" value="1"/>
</dbReference>
<dbReference type="NCBIfam" id="NF009686">
    <property type="entry name" value="PRK13207.1"/>
    <property type="match status" value="1"/>
</dbReference>
<dbReference type="NCBIfam" id="TIGR01792">
    <property type="entry name" value="urease_alph"/>
    <property type="match status" value="1"/>
</dbReference>
<dbReference type="PANTHER" id="PTHR43440">
    <property type="entry name" value="UREASE"/>
    <property type="match status" value="1"/>
</dbReference>
<dbReference type="PANTHER" id="PTHR43440:SF1">
    <property type="entry name" value="UREASE"/>
    <property type="match status" value="1"/>
</dbReference>
<dbReference type="Pfam" id="PF01979">
    <property type="entry name" value="Amidohydro_1"/>
    <property type="match status" value="1"/>
</dbReference>
<dbReference type="Pfam" id="PF00449">
    <property type="entry name" value="Urease_alpha"/>
    <property type="match status" value="1"/>
</dbReference>
<dbReference type="PRINTS" id="PR01752">
    <property type="entry name" value="UREASE"/>
</dbReference>
<dbReference type="SUPFAM" id="SSF51338">
    <property type="entry name" value="Composite domain of metallo-dependent hydrolases"/>
    <property type="match status" value="2"/>
</dbReference>
<dbReference type="SUPFAM" id="SSF51556">
    <property type="entry name" value="Metallo-dependent hydrolases"/>
    <property type="match status" value="1"/>
</dbReference>
<dbReference type="PROSITE" id="PS01120">
    <property type="entry name" value="UREASE_1"/>
    <property type="match status" value="1"/>
</dbReference>
<dbReference type="PROSITE" id="PS00145">
    <property type="entry name" value="UREASE_2"/>
    <property type="match status" value="1"/>
</dbReference>
<dbReference type="PROSITE" id="PS51368">
    <property type="entry name" value="UREASE_3"/>
    <property type="match status" value="1"/>
</dbReference>
<accession>B4RSX9</accession>
<accession>F2GBE4</accession>
<comment type="catalytic activity">
    <reaction evidence="1">
        <text>urea + 2 H2O + H(+) = hydrogencarbonate + 2 NH4(+)</text>
        <dbReference type="Rhea" id="RHEA:20557"/>
        <dbReference type="ChEBI" id="CHEBI:15377"/>
        <dbReference type="ChEBI" id="CHEBI:15378"/>
        <dbReference type="ChEBI" id="CHEBI:16199"/>
        <dbReference type="ChEBI" id="CHEBI:17544"/>
        <dbReference type="ChEBI" id="CHEBI:28938"/>
        <dbReference type="EC" id="3.5.1.5"/>
    </reaction>
</comment>
<comment type="cofactor">
    <cofactor evidence="1">
        <name>Ni cation</name>
        <dbReference type="ChEBI" id="CHEBI:25516"/>
    </cofactor>
    <text evidence="1">Binds 2 nickel ions per subunit.</text>
</comment>
<comment type="pathway">
    <text evidence="1">Nitrogen metabolism; urea degradation; CO(2) and NH(3) from urea (urease route): step 1/1.</text>
</comment>
<comment type="subunit">
    <text evidence="1">Heterotrimer of UreA (gamma), UreB (beta) and UreC (alpha) subunits. Three heterotrimers associate to form the active enzyme.</text>
</comment>
<comment type="subcellular location">
    <subcellularLocation>
        <location evidence="1">Cytoplasm</location>
    </subcellularLocation>
</comment>
<comment type="PTM">
    <text evidence="1">Carboxylation allows a single lysine to coordinate two nickel ions.</text>
</comment>
<comment type="similarity">
    <text evidence="1">Belongs to the metallo-dependent hydrolases superfamily. Urease alpha subunit family.</text>
</comment>
<feature type="chain" id="PRO_1000188859" description="Urease subunit alpha">
    <location>
        <begin position="1"/>
        <end position="567"/>
    </location>
</feature>
<feature type="domain" description="Urease" evidence="1">
    <location>
        <begin position="129"/>
        <end position="567"/>
    </location>
</feature>
<feature type="active site" description="Proton donor" evidence="1">
    <location>
        <position position="320"/>
    </location>
</feature>
<feature type="binding site" evidence="1">
    <location>
        <position position="134"/>
    </location>
    <ligand>
        <name>Ni(2+)</name>
        <dbReference type="ChEBI" id="CHEBI:49786"/>
        <label>1</label>
    </ligand>
</feature>
<feature type="binding site" evidence="1">
    <location>
        <position position="136"/>
    </location>
    <ligand>
        <name>Ni(2+)</name>
        <dbReference type="ChEBI" id="CHEBI:49786"/>
        <label>1</label>
    </ligand>
</feature>
<feature type="binding site" description="via carbamate group" evidence="1">
    <location>
        <position position="217"/>
    </location>
    <ligand>
        <name>Ni(2+)</name>
        <dbReference type="ChEBI" id="CHEBI:49786"/>
        <label>1</label>
    </ligand>
</feature>
<feature type="binding site" description="via carbamate group" evidence="1">
    <location>
        <position position="217"/>
    </location>
    <ligand>
        <name>Ni(2+)</name>
        <dbReference type="ChEBI" id="CHEBI:49786"/>
        <label>2</label>
    </ligand>
</feature>
<feature type="binding site" evidence="1">
    <location>
        <position position="219"/>
    </location>
    <ligand>
        <name>substrate</name>
    </ligand>
</feature>
<feature type="binding site" evidence="1">
    <location>
        <position position="246"/>
    </location>
    <ligand>
        <name>Ni(2+)</name>
        <dbReference type="ChEBI" id="CHEBI:49786"/>
        <label>2</label>
    </ligand>
</feature>
<feature type="binding site" evidence="1">
    <location>
        <position position="272"/>
    </location>
    <ligand>
        <name>Ni(2+)</name>
        <dbReference type="ChEBI" id="CHEBI:49786"/>
        <label>2</label>
    </ligand>
</feature>
<feature type="binding site" evidence="1">
    <location>
        <position position="360"/>
    </location>
    <ligand>
        <name>Ni(2+)</name>
        <dbReference type="ChEBI" id="CHEBI:49786"/>
        <label>1</label>
    </ligand>
</feature>
<feature type="modified residue" description="N6-carboxylysine" evidence="1">
    <location>
        <position position="217"/>
    </location>
</feature>
<protein>
    <recommendedName>
        <fullName evidence="1">Urease subunit alpha</fullName>
        <ecNumber evidence="1">3.5.1.5</ecNumber>
    </recommendedName>
    <alternativeName>
        <fullName evidence="1">Urea amidohydrolase subunit alpha</fullName>
    </alternativeName>
</protein>
<proteinExistence type="inferred from homology"/>
<evidence type="ECO:0000255" key="1">
    <source>
        <dbReference type="HAMAP-Rule" id="MF_01953"/>
    </source>
</evidence>